<proteinExistence type="evidence at protein level"/>
<organism>
    <name type="scientific">Homo sapiens</name>
    <name type="common">Human</name>
    <dbReference type="NCBI Taxonomy" id="9606"/>
    <lineage>
        <taxon>Eukaryota</taxon>
        <taxon>Metazoa</taxon>
        <taxon>Chordata</taxon>
        <taxon>Craniata</taxon>
        <taxon>Vertebrata</taxon>
        <taxon>Euteleostomi</taxon>
        <taxon>Mammalia</taxon>
        <taxon>Eutheria</taxon>
        <taxon>Euarchontoglires</taxon>
        <taxon>Primates</taxon>
        <taxon>Haplorrhini</taxon>
        <taxon>Catarrhini</taxon>
        <taxon>Hominidae</taxon>
        <taxon>Homo</taxon>
    </lineage>
</organism>
<reference key="1">
    <citation type="journal article" date="1997" name="J. Biol. Chem.">
        <title>Cloning and characterization of two human isozymes of Mg2+-independent phosphatidic acid phosphatase.</title>
        <authorList>
            <person name="Kai M."/>
            <person name="Wada I."/>
            <person name="Imai S."/>
            <person name="Sakane F."/>
            <person name="Kanoh H."/>
        </authorList>
    </citation>
    <scope>NUCLEOTIDE SEQUENCE [MRNA]</scope>
    <scope>INDUCTION</scope>
    <scope>TISSUE SPECIFICITY</scope>
</reference>
<reference key="2">
    <citation type="journal article" date="1998" name="J. Biol. Chem.">
        <title>Human type 2 phosphatidic acid phosphohydrolases. Substrate specificity of the type 2a, 2b, and 2c enzymes and cell surface activity of the 2a isoform.</title>
        <authorList>
            <person name="Roberts R."/>
            <person name="Sciorra V.A."/>
            <person name="Morris A.J."/>
        </authorList>
    </citation>
    <scope>NUCLEOTIDE SEQUENCE [MRNA]</scope>
    <scope>FUNCTION</scope>
    <scope>CATALYTIC ACTIVITY</scope>
    <scope>BIOPHYSICOCHEMICAL PROPERTIES</scope>
    <scope>SUBSTRATE SPECIFICITY</scope>
    <scope>ACTIVITY REGULATION</scope>
    <scope>PATHWAY</scope>
    <scope>SUBCELLULAR LOCATION</scope>
    <scope>GLYCOSYLATION</scope>
    <scope>MUTAGENESIS OF ASP-184</scope>
</reference>
<reference key="3">
    <citation type="journal article" date="2003" name="EMBO J.">
        <title>Regulation of cell-cell interactions by phosphatidic acid phosphatase 2b/VCIP.</title>
        <authorList>
            <person name="Humtsoe J.O."/>
            <person name="Feng S."/>
            <person name="Thakker G.D."/>
            <person name="Yang J."/>
            <person name="Hong J."/>
            <person name="Wary K.K."/>
        </authorList>
    </citation>
    <scope>NUCLEOTIDE SEQUENCE [MRNA]</scope>
    <scope>FUNCTION</scope>
    <scope>SUBCELLULAR LOCATION</scope>
    <scope>TOPOLOGY</scope>
    <scope>TISSUE SPECIFICITY</scope>
    <scope>MOTIF</scope>
</reference>
<reference key="4">
    <citation type="submission" date="1998-01" db="EMBL/GenBank/DDBJ databases">
        <title>Molecular cloning of and expression of an isoform of human phosphatidic acid phosphatase cDNA.</title>
        <authorList>
            <person name="Leung D.W."/>
            <person name="Tompkins C.K."/>
        </authorList>
    </citation>
    <scope>NUCLEOTIDE SEQUENCE [MRNA]</scope>
</reference>
<reference key="5">
    <citation type="journal article" date="1997" name="Genome Res.">
        <title>Large-scale concatenation cDNA sequencing.</title>
        <authorList>
            <person name="Yu W."/>
            <person name="Andersson B."/>
            <person name="Worley K.C."/>
            <person name="Muzny D.M."/>
            <person name="Ding Y."/>
            <person name="Liu W."/>
            <person name="Ricafrente J.Y."/>
            <person name="Wentland M.A."/>
            <person name="Lennon G."/>
            <person name="Gibbs R.A."/>
        </authorList>
    </citation>
    <scope>NUCLEOTIDE SEQUENCE [LARGE SCALE MRNA]</scope>
    <source>
        <tissue>Brain</tissue>
    </source>
</reference>
<reference key="6">
    <citation type="journal article" date="2004" name="Nat. Genet.">
        <title>Complete sequencing and characterization of 21,243 full-length human cDNAs.</title>
        <authorList>
            <person name="Ota T."/>
            <person name="Suzuki Y."/>
            <person name="Nishikawa T."/>
            <person name="Otsuki T."/>
            <person name="Sugiyama T."/>
            <person name="Irie R."/>
            <person name="Wakamatsu A."/>
            <person name="Hayashi K."/>
            <person name="Sato H."/>
            <person name="Nagai K."/>
            <person name="Kimura K."/>
            <person name="Makita H."/>
            <person name="Sekine M."/>
            <person name="Obayashi M."/>
            <person name="Nishi T."/>
            <person name="Shibahara T."/>
            <person name="Tanaka T."/>
            <person name="Ishii S."/>
            <person name="Yamamoto J."/>
            <person name="Saito K."/>
            <person name="Kawai Y."/>
            <person name="Isono Y."/>
            <person name="Nakamura Y."/>
            <person name="Nagahari K."/>
            <person name="Murakami K."/>
            <person name="Yasuda T."/>
            <person name="Iwayanagi T."/>
            <person name="Wagatsuma M."/>
            <person name="Shiratori A."/>
            <person name="Sudo H."/>
            <person name="Hosoiri T."/>
            <person name="Kaku Y."/>
            <person name="Kodaira H."/>
            <person name="Kondo H."/>
            <person name="Sugawara M."/>
            <person name="Takahashi M."/>
            <person name="Kanda K."/>
            <person name="Yokoi T."/>
            <person name="Furuya T."/>
            <person name="Kikkawa E."/>
            <person name="Omura Y."/>
            <person name="Abe K."/>
            <person name="Kamihara K."/>
            <person name="Katsuta N."/>
            <person name="Sato K."/>
            <person name="Tanikawa M."/>
            <person name="Yamazaki M."/>
            <person name="Ninomiya K."/>
            <person name="Ishibashi T."/>
            <person name="Yamashita H."/>
            <person name="Murakawa K."/>
            <person name="Fujimori K."/>
            <person name="Tanai H."/>
            <person name="Kimata M."/>
            <person name="Watanabe M."/>
            <person name="Hiraoka S."/>
            <person name="Chiba Y."/>
            <person name="Ishida S."/>
            <person name="Ono Y."/>
            <person name="Takiguchi S."/>
            <person name="Watanabe S."/>
            <person name="Yosida M."/>
            <person name="Hotuta T."/>
            <person name="Kusano J."/>
            <person name="Kanehori K."/>
            <person name="Takahashi-Fujii A."/>
            <person name="Hara H."/>
            <person name="Tanase T.-O."/>
            <person name="Nomura Y."/>
            <person name="Togiya S."/>
            <person name="Komai F."/>
            <person name="Hara R."/>
            <person name="Takeuchi K."/>
            <person name="Arita M."/>
            <person name="Imose N."/>
            <person name="Musashino K."/>
            <person name="Yuuki H."/>
            <person name="Oshima A."/>
            <person name="Sasaki N."/>
            <person name="Aotsuka S."/>
            <person name="Yoshikawa Y."/>
            <person name="Matsunawa H."/>
            <person name="Ichihara T."/>
            <person name="Shiohata N."/>
            <person name="Sano S."/>
            <person name="Moriya S."/>
            <person name="Momiyama H."/>
            <person name="Satoh N."/>
            <person name="Takami S."/>
            <person name="Terashima Y."/>
            <person name="Suzuki O."/>
            <person name="Nakagawa S."/>
            <person name="Senoh A."/>
            <person name="Mizoguchi H."/>
            <person name="Goto Y."/>
            <person name="Shimizu F."/>
            <person name="Wakebe H."/>
            <person name="Hishigaki H."/>
            <person name="Watanabe T."/>
            <person name="Sugiyama A."/>
            <person name="Takemoto M."/>
            <person name="Kawakami B."/>
            <person name="Yamazaki M."/>
            <person name="Watanabe K."/>
            <person name="Kumagai A."/>
            <person name="Itakura S."/>
            <person name="Fukuzumi Y."/>
            <person name="Fujimori Y."/>
            <person name="Komiyama M."/>
            <person name="Tashiro H."/>
            <person name="Tanigami A."/>
            <person name="Fujiwara T."/>
            <person name="Ono T."/>
            <person name="Yamada K."/>
            <person name="Fujii Y."/>
            <person name="Ozaki K."/>
            <person name="Hirao M."/>
            <person name="Ohmori Y."/>
            <person name="Kawabata A."/>
            <person name="Hikiji T."/>
            <person name="Kobatake N."/>
            <person name="Inagaki H."/>
            <person name="Ikema Y."/>
            <person name="Okamoto S."/>
            <person name="Okitani R."/>
            <person name="Kawakami T."/>
            <person name="Noguchi S."/>
            <person name="Itoh T."/>
            <person name="Shigeta K."/>
            <person name="Senba T."/>
            <person name="Matsumura K."/>
            <person name="Nakajima Y."/>
            <person name="Mizuno T."/>
            <person name="Morinaga M."/>
            <person name="Sasaki M."/>
            <person name="Togashi T."/>
            <person name="Oyama M."/>
            <person name="Hata H."/>
            <person name="Watanabe M."/>
            <person name="Komatsu T."/>
            <person name="Mizushima-Sugano J."/>
            <person name="Satoh T."/>
            <person name="Shirai Y."/>
            <person name="Takahashi Y."/>
            <person name="Nakagawa K."/>
            <person name="Okumura K."/>
            <person name="Nagase T."/>
            <person name="Nomura N."/>
            <person name="Kikuchi H."/>
            <person name="Masuho Y."/>
            <person name="Yamashita R."/>
            <person name="Nakai K."/>
            <person name="Yada T."/>
            <person name="Nakamura Y."/>
            <person name="Ohara O."/>
            <person name="Isogai T."/>
            <person name="Sugano S."/>
        </authorList>
    </citation>
    <scope>NUCLEOTIDE SEQUENCE [LARGE SCALE MRNA]</scope>
    <source>
        <tissue>Brain</tissue>
    </source>
</reference>
<reference key="7">
    <citation type="submission" date="2004-10" db="EMBL/GenBank/DDBJ databases">
        <title>Cloning of human full-length CDSs in BD Creator(TM) system donor vector.</title>
        <authorList>
            <person name="Kalnine N."/>
            <person name="Chen X."/>
            <person name="Rolfs A."/>
            <person name="Halleck A."/>
            <person name="Hines L."/>
            <person name="Eisenstein S."/>
            <person name="Koundinya M."/>
            <person name="Raphael J."/>
            <person name="Moreira D."/>
            <person name="Kelley T."/>
            <person name="LaBaer J."/>
            <person name="Lin Y."/>
            <person name="Phelan M."/>
            <person name="Farmer A."/>
        </authorList>
    </citation>
    <scope>NUCLEOTIDE SEQUENCE [LARGE SCALE MRNA]</scope>
</reference>
<reference key="8">
    <citation type="submission" date="2005-09" db="EMBL/GenBank/DDBJ databases">
        <authorList>
            <person name="Mural R.J."/>
            <person name="Istrail S."/>
            <person name="Sutton G.G."/>
            <person name="Florea L."/>
            <person name="Halpern A.L."/>
            <person name="Mobarry C.M."/>
            <person name="Lippert R."/>
            <person name="Walenz B."/>
            <person name="Shatkay H."/>
            <person name="Dew I."/>
            <person name="Miller J.R."/>
            <person name="Flanigan M.J."/>
            <person name="Edwards N.J."/>
            <person name="Bolanos R."/>
            <person name="Fasulo D."/>
            <person name="Halldorsson B.V."/>
            <person name="Hannenhalli S."/>
            <person name="Turner R."/>
            <person name="Yooseph S."/>
            <person name="Lu F."/>
            <person name="Nusskern D.R."/>
            <person name="Shue B.C."/>
            <person name="Zheng X.H."/>
            <person name="Zhong F."/>
            <person name="Delcher A.L."/>
            <person name="Huson D.H."/>
            <person name="Kravitz S.A."/>
            <person name="Mouchard L."/>
            <person name="Reinert K."/>
            <person name="Remington K.A."/>
            <person name="Clark A.G."/>
            <person name="Waterman M.S."/>
            <person name="Eichler E.E."/>
            <person name="Adams M.D."/>
            <person name="Hunkapiller M.W."/>
            <person name="Myers E.W."/>
            <person name="Venter J.C."/>
        </authorList>
    </citation>
    <scope>NUCLEOTIDE SEQUENCE [LARGE SCALE GENOMIC DNA]</scope>
</reference>
<reference key="9">
    <citation type="journal article" date="2004" name="Genome Res.">
        <title>The status, quality, and expansion of the NIH full-length cDNA project: the Mammalian Gene Collection (MGC).</title>
        <authorList>
            <consortium name="The MGC Project Team"/>
        </authorList>
    </citation>
    <scope>NUCLEOTIDE SEQUENCE [LARGE SCALE MRNA]</scope>
    <source>
        <tissue>Placenta</tissue>
    </source>
</reference>
<reference key="10">
    <citation type="journal article" date="1998" name="FEBS Lett.">
        <title>Identification of a novel human phosphatidic acid phosphatase type 2 isoform.</title>
        <authorList>
            <person name="Hooks S.B."/>
            <person name="Ragan S.P."/>
            <person name="Lynch K.R."/>
        </authorList>
    </citation>
    <scope>FUNCTION</scope>
    <scope>CATALYTIC ACTIVITY</scope>
    <scope>BIOPHYSICOCHEMICAL PROPERTIES</scope>
    <scope>SUBSTRATE SPECIFICITY</scope>
    <scope>PATHWAY</scope>
</reference>
<reference key="11">
    <citation type="journal article" date="2003" name="FEBS Lett.">
        <title>Differential localization of lipid phosphate phosphatases 1 and 3 to cell surface subdomains in polarized MDCK cells.</title>
        <authorList>
            <person name="Jia Y.J."/>
            <person name="Kai M."/>
            <person name="Wada I."/>
            <person name="Sakane F."/>
            <person name="Kanoh H."/>
        </authorList>
    </citation>
    <scope>SUBCELLULAR LOCATION</scope>
    <scope>DOMAIN</scope>
    <scope>MOTIF</scope>
</reference>
<reference key="12">
    <citation type="journal article" date="2004" name="BMC Biochem.">
        <title>Lipid phosphate phosphatases dimerise, but this interaction is not required for in vivo activity.</title>
        <authorList>
            <person name="Burnett C."/>
            <person name="Makridou P."/>
            <person name="Hewlett L."/>
            <person name="Howard K."/>
        </authorList>
    </citation>
    <scope>SUBUNIT</scope>
</reference>
<reference key="13">
    <citation type="journal article" date="2005" name="Biochem. Biophys. Res. Commun.">
        <title>Murine lipid phosphate phosphohydrolase-3 acts as a cell-associated integrin ligand.</title>
        <authorList>
            <person name="Humtsoe J.O."/>
            <person name="Bowling R.A. Jr."/>
            <person name="Feng S."/>
            <person name="Wary K.K."/>
        </authorList>
    </citation>
    <scope>FUNCTION</scope>
    <scope>MOTIF</scope>
</reference>
<reference key="14">
    <citation type="journal article" date="2006" name="J. Biochem.">
        <title>Lipid phosphate phosphatases 1 and 3 are localized in distinct lipid rafts.</title>
        <authorList>
            <person name="Kai M."/>
            <person name="Sakane F."/>
            <person name="Jia Y.J."/>
            <person name="Imai S."/>
            <person name="Yasuda S."/>
            <person name="Kanoh H."/>
        </authorList>
    </citation>
    <scope>SUBCELLULAR LOCATION</scope>
    <scope>MUTAGENESIS OF TYR-106; TYR-109 AND TYR-110</scope>
</reference>
<reference key="15">
    <citation type="journal article" date="2008" name="Biochem. J.">
        <title>Lipid phosphate phosphatases form homo- and hetero-oligomers: catalytic competency, subcellular distribution and function.</title>
        <authorList>
            <person name="Long J.S."/>
            <person name="Pyne N.J."/>
            <person name="Pyne S."/>
        </authorList>
    </citation>
    <scope>SUBUNIT</scope>
</reference>
<reference key="16">
    <citation type="journal article" date="2008" name="Mol. Cell">
        <title>Kinase-selective enrichment enables quantitative phosphoproteomics of the kinome across the cell cycle.</title>
        <authorList>
            <person name="Daub H."/>
            <person name="Olsen J.V."/>
            <person name="Bairlein M."/>
            <person name="Gnad F."/>
            <person name="Oppermann F.S."/>
            <person name="Korner R."/>
            <person name="Greff Z."/>
            <person name="Keri G."/>
            <person name="Stemmann O."/>
            <person name="Mann M."/>
        </authorList>
    </citation>
    <scope>PHOSPHORYLATION [LARGE SCALE ANALYSIS] AT SER-19</scope>
    <scope>IDENTIFICATION BY MASS SPECTROMETRY [LARGE SCALE ANALYSIS]</scope>
    <source>
        <tissue>Cervix carcinoma</tissue>
    </source>
</reference>
<reference key="17">
    <citation type="journal article" date="2008" name="Proc. Natl. Acad. Sci. U.S.A.">
        <title>A quantitative atlas of mitotic phosphorylation.</title>
        <authorList>
            <person name="Dephoure N."/>
            <person name="Zhou C."/>
            <person name="Villen J."/>
            <person name="Beausoleil S.A."/>
            <person name="Bakalarski C.E."/>
            <person name="Elledge S.J."/>
            <person name="Gygi S.P."/>
        </authorList>
    </citation>
    <scope>IDENTIFICATION BY MASS SPECTROMETRY [LARGE SCALE ANALYSIS]</scope>
    <source>
        <tissue>Cervix carcinoma</tissue>
    </source>
</reference>
<reference key="18">
    <citation type="journal article" date="2010" name="Mol. Cell. Biol.">
        <title>Lipid phosphate phosphatase 3 stabilization of beta-catenin induces endothelial cell migration and formation of branching point structures.</title>
        <authorList>
            <person name="Humtsoe J.O."/>
            <person name="Liu M."/>
            <person name="Malik A.B."/>
            <person name="Wary K.K."/>
        </authorList>
    </citation>
    <scope>FUNCTION</scope>
    <scope>INTERACTION WITH CTNND1</scope>
    <scope>SUBCELLULAR LOCATION</scope>
    <scope>REGION</scope>
</reference>
<reference key="19">
    <citation type="journal article" date="2011" name="Mol. Cancer">
        <title>Lipid phosphate phosphatase-3 regulates tumor growth via beta-catenin and CYCLIN-D1 signaling.</title>
        <authorList>
            <person name="Chatterjee I."/>
            <person name="Humtsoe J.O."/>
            <person name="Kohler E.E."/>
            <person name="Sorio C."/>
            <person name="Wary K.K."/>
        </authorList>
    </citation>
    <scope>FUNCTION</scope>
</reference>
<reference key="20">
    <citation type="journal article" date="2011" name="Sci. Signal.">
        <title>System-wide temporal characterization of the proteome and phosphoproteome of human embryonic stem cell differentiation.</title>
        <authorList>
            <person name="Rigbolt K.T."/>
            <person name="Prokhorova T.A."/>
            <person name="Akimov V."/>
            <person name="Henningsen J."/>
            <person name="Johansen P.T."/>
            <person name="Kratchmarova I."/>
            <person name="Kassem M."/>
            <person name="Mann M."/>
            <person name="Olsen J.V."/>
            <person name="Blagoev B."/>
        </authorList>
    </citation>
    <scope>PHOSPHORYLATION [LARGE SCALE ANALYSIS] AT SER-19</scope>
    <scope>IDENTIFICATION BY MASS SPECTROMETRY [LARGE SCALE ANALYSIS]</scope>
</reference>
<reference key="21">
    <citation type="journal article" date="2013" name="J. Cell Sci.">
        <title>Lipid phosphate phosphatase 3 participates in transport carrier formation and protein trafficking in the early secretory pathway.</title>
        <authorList>
            <person name="Gutierrez-Martinez E."/>
            <person name="Fernandez-Ulibarri I."/>
            <person name="Lazaro-Dieguez F."/>
            <person name="Johannes L."/>
            <person name="Pyne S."/>
            <person name="Sarri E."/>
            <person name="Egea G."/>
        </authorList>
    </citation>
    <scope>FUNCTION</scope>
    <scope>SUBCELLULAR LOCATION</scope>
</reference>
<reference key="22">
    <citation type="journal article" date="2016" name="Cardiovasc. Res.">
        <title>Role of lipid phosphate phosphatase 3 in human aortic endothelial cell function.</title>
        <authorList>
            <person name="Touat-Hamici Z."/>
            <person name="Weidmann H."/>
            <person name="Blum Y."/>
            <person name="Proust C."/>
            <person name="Durand H."/>
            <person name="Iannacci F."/>
            <person name="Codoni V."/>
            <person name="Gaignard P."/>
            <person name="Therond P."/>
            <person name="Civelek M."/>
            <person name="Karabina S.A."/>
            <person name="Lusis A.J."/>
            <person name="Cambien F."/>
            <person name="Ninio E."/>
        </authorList>
    </citation>
    <scope>FUNCTION</scope>
    <scope>CATALYTIC ACTIVITY</scope>
    <scope>PATHWAY</scope>
</reference>
<evidence type="ECO:0000250" key="1">
    <source>
        <dbReference type="UniProtKB" id="O34349"/>
    </source>
</evidence>
<evidence type="ECO:0000250" key="2">
    <source>
        <dbReference type="UniProtKB" id="P97544"/>
    </source>
</evidence>
<evidence type="ECO:0000250" key="3">
    <source>
        <dbReference type="UniProtKB" id="Q99JY8"/>
    </source>
</evidence>
<evidence type="ECO:0000255" key="4"/>
<evidence type="ECO:0000269" key="5">
    <source>
    </source>
</evidence>
<evidence type="ECO:0000269" key="6">
    <source>
    </source>
</evidence>
<evidence type="ECO:0000269" key="7">
    <source>
    </source>
</evidence>
<evidence type="ECO:0000269" key="8">
    <source>
    </source>
</evidence>
<evidence type="ECO:0000269" key="9">
    <source>
    </source>
</evidence>
<evidence type="ECO:0000269" key="10">
    <source>
    </source>
</evidence>
<evidence type="ECO:0000269" key="11">
    <source>
    </source>
</evidence>
<evidence type="ECO:0000269" key="12">
    <source>
    </source>
</evidence>
<evidence type="ECO:0000269" key="13">
    <source>
    </source>
</evidence>
<evidence type="ECO:0000269" key="14">
    <source>
    </source>
</evidence>
<evidence type="ECO:0000269" key="15">
    <source>
    </source>
</evidence>
<evidence type="ECO:0000269" key="16">
    <source>
    </source>
</evidence>
<evidence type="ECO:0000269" key="17">
    <source>
    </source>
</evidence>
<evidence type="ECO:0000303" key="18">
    <source>
    </source>
</evidence>
<evidence type="ECO:0000305" key="19"/>
<evidence type="ECO:0000305" key="20">
    <source>
    </source>
</evidence>
<evidence type="ECO:0000305" key="21">
    <source>
    </source>
</evidence>
<evidence type="ECO:0000305" key="22">
    <source>
    </source>
</evidence>
<evidence type="ECO:0000312" key="23">
    <source>
        <dbReference type="HGNC" id="HGNC:9229"/>
    </source>
</evidence>
<evidence type="ECO:0007744" key="24">
    <source>
    </source>
</evidence>
<evidence type="ECO:0007744" key="25">
    <source>
    </source>
</evidence>
<sequence>MQNYKYDKAIVPESKNGGSPALNNNPRRSGSKRVLLICLDLFCLFMAGLPFLIIETSTIKPYHRGFYCNDESIKYPLKTGETINDAVLCAVGIVIAILAIITGEFYRIYYLKKSRSTIQNPYVAALYKQVGCFLFGCAISQSFTDIAKVSIGRLRPHFLSVCNPDFSQINCSEGYIQNYRCRGDDSKVQEARKSFFSGHASFSMYTMLYLVLYLQARFTWRGARLLRPLLQFTLIMMAFYTGLSRVSDHKHHPSDVLAGFAQGALVACCIVFFVSDLFKTKTTLSLPAPAIRKEILSPVDIIDRNNHHNMM</sequence>
<comment type="function">
    <text evidence="3 13 14 16 17">Magnesium-independent phospholipid phosphatase of the plasma membrane that catalyzes the dephosphorylation of a variety of glycerolipid and sphingolipid phosphate esters including phosphatidate/PA, lysophosphatidate/LPA, diacylglycerol pyrophosphate/DGPP, sphingosine 1-phosphate/S1P and ceramide 1-phosphate/C1P (PubMed:27694435, PubMed:9607309, PubMed:9705349). Also acts on N-oleoyl ethanolamine phosphate/N-(9Z-octadecenoyl)-ethanolamine phosphate, a potential physiological compound (PubMed:9607309). Has both an extracellular and an intracellular phosphatase activity, allowing the hydrolysis and the cellular uptake of these bioactive lipid mediators from the milieu, regulating signal transduction in different cellular processes (PubMed:23591818, PubMed:27694435, PubMed:9607309). Through the dephosphorylation of extracellular sphingosine-1-phosphate and the regulation of its extra- and intracellular availability, plays a role in vascular homeostasis, regulating endothelial cell migration, adhesion, survival, proliferation and the production of pro-inflammatory cytokines (PubMed:27694435). By maintaining the appropriate levels of this lipid in the cerebellum, also ensure its proper development and function (By similarity). Through its intracellular lipid phosphatase activity may act in early compartments of the secretory pathway, regulating the formation of Golgi to endoplasmic reticulum retrograde transport carriers (PubMed:23591818).</text>
</comment>
<comment type="function">
    <text evidence="5 8 11 12">Independently of this phosphatase activity may also function in the Wnt signaling pathway and the stabilization of beta-catenin/CTNNB1, thereby regulating cell proliferation, migration and differentiation in angiogenesis or yet in tumor growth (PubMed:20123964, PubMed:21569306). Also plays a role in integrin-mediated cell-cell adhesion in angiogenesis (PubMed:12660161, PubMed:16099422).</text>
</comment>
<comment type="catalytic activity">
    <reaction evidence="16 17">
        <text>a 1,2-diacyl-sn-glycero-3-phosphate + H2O = a 1,2-diacyl-sn-glycerol + phosphate</text>
        <dbReference type="Rhea" id="RHEA:27429"/>
        <dbReference type="ChEBI" id="CHEBI:15377"/>
        <dbReference type="ChEBI" id="CHEBI:17815"/>
        <dbReference type="ChEBI" id="CHEBI:43474"/>
        <dbReference type="ChEBI" id="CHEBI:58608"/>
        <dbReference type="EC" id="3.1.3.4"/>
    </reaction>
    <physiologicalReaction direction="left-to-right" evidence="22">
        <dbReference type="Rhea" id="RHEA:27430"/>
    </physiologicalReaction>
</comment>
<comment type="catalytic activity">
    <reaction evidence="17">
        <text>1,2-dihexadecanoyl-sn-glycero-3-phosphate + H2O = 1,2-dihexadecanoyl-sn-glycerol + phosphate</text>
        <dbReference type="Rhea" id="RHEA:43236"/>
        <dbReference type="ChEBI" id="CHEBI:15377"/>
        <dbReference type="ChEBI" id="CHEBI:43474"/>
        <dbReference type="ChEBI" id="CHEBI:72859"/>
        <dbReference type="ChEBI" id="CHEBI:82929"/>
    </reaction>
    <physiologicalReaction direction="left-to-right" evidence="22">
        <dbReference type="Rhea" id="RHEA:43237"/>
    </physiologicalReaction>
</comment>
<comment type="catalytic activity">
    <reaction evidence="16">
        <text>1,2-di-(9Z-octadecenoyl)-sn-glycero-3-phosphate + H2O = 1,2-di-(9Z-octadecenoyl)-sn-glycerol + phosphate</text>
        <dbReference type="Rhea" id="RHEA:43244"/>
        <dbReference type="ChEBI" id="CHEBI:15377"/>
        <dbReference type="ChEBI" id="CHEBI:43474"/>
        <dbReference type="ChEBI" id="CHEBI:52333"/>
        <dbReference type="ChEBI" id="CHEBI:74546"/>
    </reaction>
    <physiologicalReaction direction="left-to-right" evidence="21">
        <dbReference type="Rhea" id="RHEA:43245"/>
    </physiologicalReaction>
</comment>
<comment type="catalytic activity">
    <reaction evidence="16 17">
        <text>a monoacyl-sn-glycero-3-phosphate + H2O = a monoacylglycerol + phosphate</text>
        <dbReference type="Rhea" id="RHEA:46736"/>
        <dbReference type="ChEBI" id="CHEBI:15377"/>
        <dbReference type="ChEBI" id="CHEBI:17408"/>
        <dbReference type="ChEBI" id="CHEBI:43474"/>
        <dbReference type="ChEBI" id="CHEBI:77589"/>
    </reaction>
    <physiologicalReaction direction="left-to-right" evidence="22">
        <dbReference type="Rhea" id="RHEA:46737"/>
    </physiologicalReaction>
</comment>
<comment type="catalytic activity">
    <reaction evidence="16 17">
        <text>(9Z)-octadecenoyl-sn-glycero-3-phosphate + H2O = (9Z-octadecenoyl)-glycerol + phosphate</text>
        <dbReference type="Rhea" id="RHEA:50884"/>
        <dbReference type="ChEBI" id="CHEBI:15377"/>
        <dbReference type="ChEBI" id="CHEBI:43474"/>
        <dbReference type="ChEBI" id="CHEBI:75937"/>
        <dbReference type="ChEBI" id="CHEBI:84973"/>
    </reaction>
    <physiologicalReaction direction="left-to-right" evidence="22">
        <dbReference type="Rhea" id="RHEA:50885"/>
    </physiologicalReaction>
</comment>
<comment type="catalytic activity">
    <reaction evidence="14 17">
        <text>sphing-4-enine 1-phosphate + H2O = sphing-4-enine + phosphate</text>
        <dbReference type="Rhea" id="RHEA:27518"/>
        <dbReference type="ChEBI" id="CHEBI:15377"/>
        <dbReference type="ChEBI" id="CHEBI:43474"/>
        <dbReference type="ChEBI" id="CHEBI:57756"/>
        <dbReference type="ChEBI" id="CHEBI:60119"/>
    </reaction>
    <physiologicalReaction direction="left-to-right" evidence="14">
        <dbReference type="Rhea" id="RHEA:27519"/>
    </physiologicalReaction>
</comment>
<comment type="catalytic activity">
    <reaction evidence="17">
        <text>an N-acylsphing-4-enine 1-phosphate + H2O = an N-acylsphing-4-enine + phosphate</text>
        <dbReference type="Rhea" id="RHEA:33743"/>
        <dbReference type="ChEBI" id="CHEBI:15377"/>
        <dbReference type="ChEBI" id="CHEBI:43474"/>
        <dbReference type="ChEBI" id="CHEBI:52639"/>
        <dbReference type="ChEBI" id="CHEBI:57674"/>
    </reaction>
    <physiologicalReaction direction="left-to-right" evidence="22">
        <dbReference type="Rhea" id="RHEA:33744"/>
    </physiologicalReaction>
</comment>
<comment type="catalytic activity">
    <reaction evidence="17">
        <text>N-(octanoyl)-sphing-4-enine-1-phosphate + H2O = N-octanoylsphing-4-enine + phosphate</text>
        <dbReference type="Rhea" id="RHEA:62040"/>
        <dbReference type="ChEBI" id="CHEBI:15377"/>
        <dbReference type="ChEBI" id="CHEBI:43474"/>
        <dbReference type="ChEBI" id="CHEBI:45815"/>
        <dbReference type="ChEBI" id="CHEBI:85376"/>
    </reaction>
    <physiologicalReaction direction="left-to-right" evidence="22">
        <dbReference type="Rhea" id="RHEA:62041"/>
    </physiologicalReaction>
</comment>
<comment type="catalytic activity">
    <reaction evidence="16">
        <text>N-(9Z-octadecenoyl)-ethanolamine phosphate + H2O = N-(9Z-octadecenoyl) ethanolamine + phosphate</text>
        <dbReference type="Rhea" id="RHEA:62160"/>
        <dbReference type="ChEBI" id="CHEBI:15377"/>
        <dbReference type="ChEBI" id="CHEBI:43474"/>
        <dbReference type="ChEBI" id="CHEBI:71466"/>
        <dbReference type="ChEBI" id="CHEBI:145465"/>
    </reaction>
    <physiologicalReaction direction="left-to-right" evidence="21">
        <dbReference type="Rhea" id="RHEA:62161"/>
    </physiologicalReaction>
</comment>
<comment type="activity regulation">
    <text evidence="17">Magnesium-independent phospholipid phosphatase (PubMed:9705349). Insensitive to N-ethylmaleimide (PubMed:9705349). Inhibited by sphingosine, zinc ions and modestly by propanolol (PubMed:9705349).</text>
</comment>
<comment type="biophysicochemical properties">
    <kinetics>
        <KM evidence="16">100 uM for 1,2-di-(9Z-octadecenoyl)-sn-glycero-3-phosphate</KM>
        <KM evidence="16">110 uM for (9Z)-octadecenoyl-sn-glycero-3-phosphate</KM>
        <KM evidence="16">56 uM for N-oleoyl ethanolamine phosphatidic acid</KM>
        <Vmax evidence="17">0.27 nmol/min/mg enzyme with 1,2-dihexadecanoyl-sn-glycero-3-phosphate as substrate</Vmax>
        <Vmax evidence="17">0.46 nmol/min/mg enzyme with (9Z)-octadecenoyl-sn-glycero-3-phosphate as substrate</Vmax>
        <Vmax evidence="17">0.36 nmol/min/mg enzyme with N-(octanoyl)-sphing-4-enine-1-phosphate as substrate</Vmax>
        <Vmax evidence="17">0.24 nmol/min/mg enzyme with sphing-4-enine 1-phosphate as substrate</Vmax>
        <Vmax evidence="16">13.0 nmol/min/mg enzyme with 1,2-di-(9Z-octadecenoyl)-sn-glycero-3-phosphate as substrate</Vmax>
        <Vmax evidence="16">15.0 nmol/min/mg enzyme with (9Z)-octadecenoyl-sn-glycero-3-phosphate as substrate</Vmax>
        <Vmax evidence="16">29.0 nmol/min/mg enzyme with N-(9Z-octadecenoyl)-ethanolamine phosphate as substrate</Vmax>
    </kinetics>
</comment>
<comment type="pathway">
    <text evidence="14 16 17">Lipid metabolism; phospholipid metabolism.</text>
</comment>
<comment type="subunit">
    <text evidence="7 10 11">Forms functional homodimers and homooligomers that are not required for substrate recognition and catalytic activity (PubMed:14725715). Can also form heterooligomers with other PLPP2 and PLPP3 (PubMed:18215144). Interacts with CTNND1; negatively regulates the PLPP3-mediated stabilization of beta-catenin/CTNNB1 (PubMed:20123964).</text>
</comment>
<comment type="interaction">
    <interactant intactId="EBI-766232">
        <id>O14495</id>
    </interactant>
    <interactant intactId="EBI-701927">
        <id>O60716</id>
        <label>CTNND1</label>
    </interactant>
    <organismsDiffer>false</organismsDiffer>
    <experiments>9</experiments>
</comment>
<comment type="subcellular location">
    <subcellularLocation>
        <location evidence="5 11 17">Cell membrane</location>
        <topology evidence="2">Multi-pass membrane protein</topology>
    </subcellularLocation>
    <subcellularLocation>
        <location evidence="6">Basolateral cell membrane</location>
        <topology evidence="2">Multi-pass membrane protein</topology>
    </subcellularLocation>
    <subcellularLocation>
        <location evidence="13">Endoplasmic reticulum membrane</location>
        <topology evidence="2">Multi-pass membrane protein</topology>
    </subcellularLocation>
    <subcellularLocation>
        <location evidence="13">Endoplasmic reticulum-Golgi intermediate compartment membrane</location>
        <topology evidence="2">Multi-pass membrane protein</topology>
    </subcellularLocation>
    <subcellularLocation>
        <location evidence="13">Golgi apparatus membrane</location>
        <topology evidence="2">Multi-pass membrane protein</topology>
    </subcellularLocation>
    <subcellularLocation>
        <location evidence="13">Golgi apparatus</location>
        <location evidence="13">trans-Golgi network membrane</location>
        <topology evidence="2">Multi-pass membrane protein</topology>
    </subcellularLocation>
    <subcellularLocation>
        <location evidence="9">Membrane raft</location>
        <topology evidence="2">Multi-pass membrane protein</topology>
    </subcellularLocation>
    <text evidence="13">Cycles between the endoplasmic reticulum and the Golgi.</text>
</comment>
<comment type="tissue specificity">
    <text evidence="5 15">Ubiquitously expressed (PubMed:12660161, PubMed:9305923). Highly expressed in heart and placenta (PubMed:9305923).</text>
</comment>
<comment type="induction">
    <text evidence="15">By EGF, VEGF, FGF2 and phorbol myristate acetate (PMA).</text>
</comment>
<comment type="domain">
    <text evidence="5 8">The integrin-binding motif mediates the binding to integrin alpha-5/beta-1 (ITGA5:ITGB1) and integrin alpha-V/beta-3 (ITGAV:ITGB3) and is required for the function in integrin-mediated cell-cell adhesion.</text>
</comment>
<comment type="domain">
    <text evidence="6">The dityrosine basolateral targeting motif mediates localization to the basolateral membrane in polarized cells.</text>
</comment>
<comment type="PTM">
    <text evidence="17">N-glycosylated (PubMed:9705349). Contains high-mannose oligosaccharides (PubMed:9705349).</text>
</comment>
<comment type="similarity">
    <text evidence="19">Belongs to the PA-phosphatase related phosphoesterase family.</text>
</comment>
<comment type="sequence caution" evidence="19">
    <conflict type="frameshift">
        <sequence resource="EMBL-CDS" id="AAB50222"/>
    </conflict>
</comment>
<gene>
    <name evidence="23" type="primary">PLPP3</name>
    <name type="synonym">LPP3</name>
    <name type="synonym">PPAP2B</name>
</gene>
<name>PLPP3_HUMAN</name>
<keyword id="KW-1003">Cell membrane</keyword>
<keyword id="KW-0256">Endoplasmic reticulum</keyword>
<keyword id="KW-0325">Glycoprotein</keyword>
<keyword id="KW-0333">Golgi apparatus</keyword>
<keyword id="KW-0378">Hydrolase</keyword>
<keyword id="KW-0443">Lipid metabolism</keyword>
<keyword id="KW-0472">Membrane</keyword>
<keyword id="KW-0597">Phosphoprotein</keyword>
<keyword id="KW-1267">Proteomics identification</keyword>
<keyword id="KW-1185">Reference proteome</keyword>
<keyword id="KW-0812">Transmembrane</keyword>
<keyword id="KW-1133">Transmembrane helix</keyword>
<feature type="chain" id="PRO_0000220912" description="Phospholipid phosphatase 3">
    <location>
        <begin position="1"/>
        <end position="311"/>
    </location>
</feature>
<feature type="topological domain" description="Cytoplasmic" evidence="20">
    <location>
        <begin position="1"/>
        <end position="33"/>
    </location>
</feature>
<feature type="transmembrane region" description="Helical" evidence="4">
    <location>
        <begin position="34"/>
        <end position="54"/>
    </location>
</feature>
<feature type="topological domain" description="Extracellular" evidence="20">
    <location>
        <begin position="55"/>
        <end position="85"/>
    </location>
</feature>
<feature type="transmembrane region" description="Helical" evidence="4">
    <location>
        <begin position="86"/>
        <end position="106"/>
    </location>
</feature>
<feature type="topological domain" description="Cytoplasmic" evidence="20">
    <location>
        <begin position="107"/>
        <end position="122"/>
    </location>
</feature>
<feature type="transmembrane region" description="Helical" evidence="4">
    <location>
        <begin position="123"/>
        <end position="143"/>
    </location>
</feature>
<feature type="topological domain" description="Extracellular" evidence="5">
    <location>
        <begin position="144"/>
        <end position="193"/>
    </location>
</feature>
<feature type="transmembrane region" description="Helical" evidence="4">
    <location>
        <begin position="194"/>
        <end position="214"/>
    </location>
</feature>
<feature type="topological domain" description="Cytoplasmic" evidence="20">
    <location>
        <begin position="215"/>
        <end position="225"/>
    </location>
</feature>
<feature type="transmembrane region" description="Helical" evidence="4">
    <location>
        <begin position="226"/>
        <end position="243"/>
    </location>
</feature>
<feature type="topological domain" description="Extracellular" evidence="20">
    <location>
        <begin position="244"/>
        <end position="257"/>
    </location>
</feature>
<feature type="transmembrane region" description="Helical" evidence="4">
    <location>
        <begin position="258"/>
        <end position="278"/>
    </location>
</feature>
<feature type="topological domain" description="Cytoplasmic" evidence="20">
    <location>
        <begin position="279"/>
        <end position="311"/>
    </location>
</feature>
<feature type="region of interest" description="Phosphatase sequence motif I" evidence="1">
    <location>
        <begin position="148"/>
        <end position="156"/>
    </location>
</feature>
<feature type="region of interest" description="Phosphatase sequence motif II" evidence="1">
    <location>
        <begin position="196"/>
        <end position="199"/>
    </location>
</feature>
<feature type="region of interest" description="Phosphatase sequence motif III" evidence="1">
    <location>
        <begin position="244"/>
        <end position="255"/>
    </location>
</feature>
<feature type="region of interest" description="Mediates interaction with CTNND1" evidence="11">
    <location>
        <begin position="275"/>
        <end position="311"/>
    </location>
</feature>
<feature type="short sequence motif" description="Dityrosine basolateral targeting motif" evidence="6">
    <location>
        <begin position="109"/>
        <end position="110"/>
    </location>
</feature>
<feature type="short sequence motif" description="Integrin-binding motif" evidence="5 8">
    <location>
        <begin position="182"/>
        <end position="184"/>
    </location>
</feature>
<feature type="active site" description="Proton donors" evidence="1">
    <location>
        <position position="199"/>
    </location>
</feature>
<feature type="active site" description="Nucleophile" evidence="1">
    <location>
        <position position="251"/>
    </location>
</feature>
<feature type="site" description="Stabilizes the active site histidine for nucleophilic attack" evidence="1">
    <location>
        <position position="255"/>
    </location>
</feature>
<feature type="modified residue" description="Phosphoserine" evidence="24 25">
    <location>
        <position position="19"/>
    </location>
</feature>
<feature type="glycosylation site" description="N-linked (GlcNAc...) asparagine" evidence="4">
    <location>
        <position position="170"/>
    </location>
</feature>
<feature type="mutagenesis site" description="No effect on basolateral localization in polarized cells." evidence="9">
    <original>Y</original>
    <variation>A</variation>
    <location>
        <position position="106"/>
    </location>
</feature>
<feature type="mutagenesis site" description="Loss of basolateral localization in polarized cells." evidence="9">
    <original>Y</original>
    <variation>A</variation>
    <location>
        <position position="109"/>
    </location>
</feature>
<feature type="mutagenesis site" description="Loss of basolateral localization in polarized cells." evidence="9">
    <original>Y</original>
    <variation>A</variation>
    <location>
        <position position="110"/>
    </location>
</feature>
<feature type="mutagenesis site" description="Loss of binding to integrin. Loss of function in integrin-mediated cell-cell interaction." evidence="17">
    <original>D</original>
    <variation>E</variation>
    <location>
        <position position="184"/>
    </location>
</feature>
<feature type="sequence conflict" description="In Ref. 7; AAV38396." evidence="19" ref="7">
    <original>K</original>
    <variation>M</variation>
    <location>
        <position position="32"/>
    </location>
</feature>
<feature type="sequence conflict" description="In Ref. 9; AAH09196." evidence="19" ref="9">
    <original>T</original>
    <variation>M</variation>
    <location>
        <position position="282"/>
    </location>
</feature>
<protein>
    <recommendedName>
        <fullName evidence="19">Phospholipid phosphatase 3</fullName>
        <ecNumber evidence="14">3.1.3.-</ecNumber>
        <ecNumber evidence="16 17">3.1.3.4</ecNumber>
    </recommendedName>
    <alternativeName>
        <fullName>Lipid phosphate phosphohydrolase 3</fullName>
    </alternativeName>
    <alternativeName>
        <fullName>PAP2-beta</fullName>
    </alternativeName>
    <alternativeName>
        <fullName>Phosphatidate phosphohydrolase type 2b</fullName>
    </alternativeName>
    <alternativeName>
        <fullName>Phosphatidic acid phosphatase 2b</fullName>
        <shortName>PAP-2b</shortName>
        <shortName>PAP2b</shortName>
    </alternativeName>
    <alternativeName>
        <fullName evidence="18">Vascular endothelial growth factor and type I collagen-inducible protein</fullName>
        <shortName evidence="18">VCIP</shortName>
    </alternativeName>
</protein>
<dbReference type="EC" id="3.1.3.-" evidence="14"/>
<dbReference type="EC" id="3.1.3.4" evidence="16 17"/>
<dbReference type="EMBL" id="AB000889">
    <property type="protein sequence ID" value="BAA22594.1"/>
    <property type="molecule type" value="mRNA"/>
</dbReference>
<dbReference type="EMBL" id="AF017786">
    <property type="protein sequence ID" value="AAC63433.1"/>
    <property type="molecule type" value="mRNA"/>
</dbReference>
<dbReference type="EMBL" id="AF480883">
    <property type="protein sequence ID" value="AAO84481.1"/>
    <property type="molecule type" value="mRNA"/>
</dbReference>
<dbReference type="EMBL" id="AF043329">
    <property type="protein sequence ID" value="AAD02271.1"/>
    <property type="molecule type" value="mRNA"/>
</dbReference>
<dbReference type="EMBL" id="U79294">
    <property type="protein sequence ID" value="AAB50222.1"/>
    <property type="status" value="ALT_FRAME"/>
    <property type="molecule type" value="mRNA"/>
</dbReference>
<dbReference type="EMBL" id="AK312439">
    <property type="protein sequence ID" value="BAG35348.1"/>
    <property type="molecule type" value="mRNA"/>
</dbReference>
<dbReference type="EMBL" id="BT019589">
    <property type="protein sequence ID" value="AAV38396.1"/>
    <property type="molecule type" value="mRNA"/>
</dbReference>
<dbReference type="EMBL" id="CH471059">
    <property type="protein sequence ID" value="EAX06651.1"/>
    <property type="molecule type" value="Genomic_DNA"/>
</dbReference>
<dbReference type="EMBL" id="CH471059">
    <property type="protein sequence ID" value="EAX06652.1"/>
    <property type="molecule type" value="Genomic_DNA"/>
</dbReference>
<dbReference type="EMBL" id="CH471059">
    <property type="protein sequence ID" value="EAX06653.1"/>
    <property type="molecule type" value="Genomic_DNA"/>
</dbReference>
<dbReference type="EMBL" id="BC009196">
    <property type="protein sequence ID" value="AAH09196.1"/>
    <property type="molecule type" value="mRNA"/>
</dbReference>
<dbReference type="CCDS" id="CCDS604.1"/>
<dbReference type="RefSeq" id="NP_003704.3">
    <property type="nucleotide sequence ID" value="NM_003713.4"/>
</dbReference>
<dbReference type="BioGRID" id="114171">
    <property type="interactions" value="31"/>
</dbReference>
<dbReference type="CORUM" id="O14495"/>
<dbReference type="FunCoup" id="O14495">
    <property type="interactions" value="1128"/>
</dbReference>
<dbReference type="IntAct" id="O14495">
    <property type="interactions" value="9"/>
</dbReference>
<dbReference type="MINT" id="O14495"/>
<dbReference type="STRING" id="9606.ENSP00000360296"/>
<dbReference type="SwissLipids" id="SLP:000001642"/>
<dbReference type="DEPOD" id="PLPP3"/>
<dbReference type="GlyCosmos" id="O14495">
    <property type="glycosylation" value="1 site, No reported glycans"/>
</dbReference>
<dbReference type="GlyGen" id="O14495">
    <property type="glycosylation" value="2 sites, 1 O-linked glycan (1 site)"/>
</dbReference>
<dbReference type="iPTMnet" id="O14495"/>
<dbReference type="PhosphoSitePlus" id="O14495"/>
<dbReference type="SwissPalm" id="O14495"/>
<dbReference type="BioMuta" id="PLPP3"/>
<dbReference type="jPOST" id="O14495"/>
<dbReference type="MassIVE" id="O14495"/>
<dbReference type="PaxDb" id="9606-ENSP00000360296"/>
<dbReference type="PeptideAtlas" id="O14495"/>
<dbReference type="ProteomicsDB" id="48039"/>
<dbReference type="Pumba" id="O14495"/>
<dbReference type="Antibodypedia" id="33239">
    <property type="antibodies" value="128 antibodies from 27 providers"/>
</dbReference>
<dbReference type="DNASU" id="8613"/>
<dbReference type="Ensembl" id="ENST00000371250.4">
    <property type="protein sequence ID" value="ENSP00000360296.3"/>
    <property type="gene ID" value="ENSG00000162407.9"/>
</dbReference>
<dbReference type="GeneID" id="8613"/>
<dbReference type="KEGG" id="hsa:8613"/>
<dbReference type="MANE-Select" id="ENST00000371250.4">
    <property type="protein sequence ID" value="ENSP00000360296.3"/>
    <property type="RefSeq nucleotide sequence ID" value="NM_003713.5"/>
    <property type="RefSeq protein sequence ID" value="NP_003704.3"/>
</dbReference>
<dbReference type="UCSC" id="uc001cyj.3">
    <property type="organism name" value="human"/>
</dbReference>
<dbReference type="AGR" id="HGNC:9229"/>
<dbReference type="CTD" id="8613"/>
<dbReference type="DisGeNET" id="8613"/>
<dbReference type="GeneCards" id="PLPP3"/>
<dbReference type="HGNC" id="HGNC:9229">
    <property type="gene designation" value="PLPP3"/>
</dbReference>
<dbReference type="HPA" id="ENSG00000162407">
    <property type="expression patterns" value="Low tissue specificity"/>
</dbReference>
<dbReference type="MIM" id="607125">
    <property type="type" value="gene"/>
</dbReference>
<dbReference type="neXtProt" id="NX_O14495"/>
<dbReference type="OpenTargets" id="ENSG00000162407"/>
<dbReference type="PharmGKB" id="PA33553"/>
<dbReference type="VEuPathDB" id="HostDB:ENSG00000162407"/>
<dbReference type="eggNOG" id="KOG3030">
    <property type="taxonomic scope" value="Eukaryota"/>
</dbReference>
<dbReference type="GeneTree" id="ENSGT00940000156450"/>
<dbReference type="HOGENOM" id="CLU_021458_3_0_1"/>
<dbReference type="InParanoid" id="O14495"/>
<dbReference type="OMA" id="YRIHYLH"/>
<dbReference type="OrthoDB" id="8907274at2759"/>
<dbReference type="PAN-GO" id="O14495">
    <property type="GO annotations" value="6 GO annotations based on evolutionary models"/>
</dbReference>
<dbReference type="PhylomeDB" id="O14495"/>
<dbReference type="TreeFam" id="TF316040"/>
<dbReference type="BRENDA" id="3.1.3.4">
    <property type="organism ID" value="2681"/>
</dbReference>
<dbReference type="PathwayCommons" id="O14495"/>
<dbReference type="Reactome" id="R-HSA-9845614">
    <property type="pathway name" value="Sphingolipid catabolism"/>
</dbReference>
<dbReference type="SignaLink" id="O14495"/>
<dbReference type="UniPathway" id="UPA00085"/>
<dbReference type="BioGRID-ORCS" id="8613">
    <property type="hits" value="7 hits in 1156 CRISPR screens"/>
</dbReference>
<dbReference type="CD-CODE" id="FB4E32DD">
    <property type="entry name" value="Presynaptic clusters and postsynaptic densities"/>
</dbReference>
<dbReference type="ChiTaRS" id="PLPP3">
    <property type="organism name" value="human"/>
</dbReference>
<dbReference type="GeneWiki" id="PPAP2B"/>
<dbReference type="GenomeRNAi" id="8613"/>
<dbReference type="Pharos" id="O14495">
    <property type="development level" value="Tbio"/>
</dbReference>
<dbReference type="PRO" id="PR:O14495"/>
<dbReference type="Proteomes" id="UP000005640">
    <property type="component" value="Chromosome 1"/>
</dbReference>
<dbReference type="RNAct" id="O14495">
    <property type="molecule type" value="protein"/>
</dbReference>
<dbReference type="Bgee" id="ENSG00000162407">
    <property type="expression patterns" value="Expressed in decidua and 206 other cell types or tissues"/>
</dbReference>
<dbReference type="GO" id="GO:0005912">
    <property type="term" value="C:adherens junction"/>
    <property type="evidence" value="ECO:0000314"/>
    <property type="project" value="BHF-UCL"/>
</dbReference>
<dbReference type="GO" id="GO:0016323">
    <property type="term" value="C:basolateral plasma membrane"/>
    <property type="evidence" value="ECO:0000314"/>
    <property type="project" value="UniProtKB"/>
</dbReference>
<dbReference type="GO" id="GO:0070971">
    <property type="term" value="C:endoplasmic reticulum exit site"/>
    <property type="evidence" value="ECO:0000314"/>
    <property type="project" value="UniProtKB"/>
</dbReference>
<dbReference type="GO" id="GO:0005789">
    <property type="term" value="C:endoplasmic reticulum membrane"/>
    <property type="evidence" value="ECO:0007669"/>
    <property type="project" value="UniProtKB-SubCell"/>
</dbReference>
<dbReference type="GO" id="GO:0033116">
    <property type="term" value="C:endoplasmic reticulum-Golgi intermediate compartment membrane"/>
    <property type="evidence" value="ECO:0000314"/>
    <property type="project" value="UniProtKB"/>
</dbReference>
<dbReference type="GO" id="GO:0005794">
    <property type="term" value="C:Golgi apparatus"/>
    <property type="evidence" value="ECO:0000314"/>
    <property type="project" value="UniProtKB"/>
</dbReference>
<dbReference type="GO" id="GO:0000139">
    <property type="term" value="C:Golgi membrane"/>
    <property type="evidence" value="ECO:0007669"/>
    <property type="project" value="UniProtKB-SubCell"/>
</dbReference>
<dbReference type="GO" id="GO:0016020">
    <property type="term" value="C:membrane"/>
    <property type="evidence" value="ECO:0000314"/>
    <property type="project" value="UniProtKB"/>
</dbReference>
<dbReference type="GO" id="GO:0045121">
    <property type="term" value="C:membrane raft"/>
    <property type="evidence" value="ECO:0000314"/>
    <property type="project" value="UniProtKB"/>
</dbReference>
<dbReference type="GO" id="GO:0005886">
    <property type="term" value="C:plasma membrane"/>
    <property type="evidence" value="ECO:0000318"/>
    <property type="project" value="GO_Central"/>
</dbReference>
<dbReference type="GO" id="GO:0005802">
    <property type="term" value="C:trans-Golgi network"/>
    <property type="evidence" value="ECO:0000314"/>
    <property type="project" value="UniProtKB"/>
</dbReference>
<dbReference type="GO" id="GO:0106235">
    <property type="term" value="F:ceramide-1-phosphate phosphatase activity"/>
    <property type="evidence" value="ECO:0000314"/>
    <property type="project" value="UniProtKB"/>
</dbReference>
<dbReference type="GO" id="GO:0070097">
    <property type="term" value="F:delta-catenin binding"/>
    <property type="evidence" value="ECO:0000353"/>
    <property type="project" value="BHF-UCL"/>
</dbReference>
<dbReference type="GO" id="GO:0005178">
    <property type="term" value="F:integrin binding"/>
    <property type="evidence" value="ECO:0000314"/>
    <property type="project" value="UniProtKB"/>
</dbReference>
<dbReference type="GO" id="GO:0008195">
    <property type="term" value="F:phosphatidate phosphatase activity"/>
    <property type="evidence" value="ECO:0000314"/>
    <property type="project" value="UniProtKB"/>
</dbReference>
<dbReference type="GO" id="GO:0042392">
    <property type="term" value="F:sphingosine-1-phosphate phosphatase activity"/>
    <property type="evidence" value="ECO:0000314"/>
    <property type="project" value="UniProtKB"/>
</dbReference>
<dbReference type="GO" id="GO:0060020">
    <property type="term" value="P:Bergmann glial cell differentiation"/>
    <property type="evidence" value="ECO:0007669"/>
    <property type="project" value="Ensembl"/>
</dbReference>
<dbReference type="GO" id="GO:0001568">
    <property type="term" value="P:blood vessel development"/>
    <property type="evidence" value="ECO:0007669"/>
    <property type="project" value="Ensembl"/>
</dbReference>
<dbReference type="GO" id="GO:0098609">
    <property type="term" value="P:cell-cell adhesion"/>
    <property type="evidence" value="ECO:0000318"/>
    <property type="project" value="GO_Central"/>
</dbReference>
<dbReference type="GO" id="GO:0033631">
    <property type="term" value="P:cell-cell adhesion mediated by integrin"/>
    <property type="evidence" value="ECO:0000314"/>
    <property type="project" value="UniProtKB"/>
</dbReference>
<dbReference type="GO" id="GO:0006672">
    <property type="term" value="P:ceramide metabolic process"/>
    <property type="evidence" value="ECO:0000314"/>
    <property type="project" value="UniProtKB"/>
</dbReference>
<dbReference type="GO" id="GO:0001702">
    <property type="term" value="P:gastrulation with mouth forming second"/>
    <property type="evidence" value="ECO:0007669"/>
    <property type="project" value="Ensembl"/>
</dbReference>
<dbReference type="GO" id="GO:0007229">
    <property type="term" value="P:integrin-mediated signaling pathway"/>
    <property type="evidence" value="ECO:0000314"/>
    <property type="project" value="UniProtKB"/>
</dbReference>
<dbReference type="GO" id="GO:0046839">
    <property type="term" value="P:phospholipid dephosphorylation"/>
    <property type="evidence" value="ECO:0000314"/>
    <property type="project" value="UniProtKB"/>
</dbReference>
<dbReference type="GO" id="GO:0006644">
    <property type="term" value="P:phospholipid metabolic process"/>
    <property type="evidence" value="ECO:0000314"/>
    <property type="project" value="UniProtKB"/>
</dbReference>
<dbReference type="GO" id="GO:0010595">
    <property type="term" value="P:positive regulation of endothelial cell migration"/>
    <property type="evidence" value="ECO:0000315"/>
    <property type="project" value="BHF-UCL"/>
</dbReference>
<dbReference type="GO" id="GO:1904906">
    <property type="term" value="P:positive regulation of endothelial cell-matrix adhesion via fibronectin"/>
    <property type="evidence" value="ECO:0000314"/>
    <property type="project" value="BHF-UCL"/>
</dbReference>
<dbReference type="GO" id="GO:0034112">
    <property type="term" value="P:positive regulation of homotypic cell-cell adhesion"/>
    <property type="evidence" value="ECO:0000315"/>
    <property type="project" value="BHF-UCL"/>
</dbReference>
<dbReference type="GO" id="GO:1902533">
    <property type="term" value="P:positive regulation of intracellular signal transduction"/>
    <property type="evidence" value="ECO:0000314"/>
    <property type="project" value="BHF-UCL"/>
</dbReference>
<dbReference type="GO" id="GO:0045944">
    <property type="term" value="P:positive regulation of transcription by RNA polymerase II"/>
    <property type="evidence" value="ECO:0000314"/>
    <property type="project" value="BHF-UCL"/>
</dbReference>
<dbReference type="GO" id="GO:0050821">
    <property type="term" value="P:protein stabilization"/>
    <property type="evidence" value="ECO:0000314"/>
    <property type="project" value="BHF-UCL"/>
</dbReference>
<dbReference type="GO" id="GO:1902068">
    <property type="term" value="P:regulation of sphingolipid mediated signaling pathway"/>
    <property type="evidence" value="ECO:0007669"/>
    <property type="project" value="Ensembl"/>
</dbReference>
<dbReference type="GO" id="GO:0030111">
    <property type="term" value="P:regulation of Wnt signaling pathway"/>
    <property type="evidence" value="ECO:0007669"/>
    <property type="project" value="Ensembl"/>
</dbReference>
<dbReference type="GO" id="GO:0006890">
    <property type="term" value="P:retrograde vesicle-mediated transport, Golgi to endoplasmic reticulum"/>
    <property type="evidence" value="ECO:0000315"/>
    <property type="project" value="UniProtKB"/>
</dbReference>
<dbReference type="GO" id="GO:0007165">
    <property type="term" value="P:signal transduction"/>
    <property type="evidence" value="ECO:0000318"/>
    <property type="project" value="GO_Central"/>
</dbReference>
<dbReference type="GO" id="GO:0030149">
    <property type="term" value="P:sphingolipid catabolic process"/>
    <property type="evidence" value="ECO:0000304"/>
    <property type="project" value="Reactome"/>
</dbReference>
<dbReference type="GO" id="GO:0006670">
    <property type="term" value="P:sphingosine metabolic process"/>
    <property type="evidence" value="ECO:0000314"/>
    <property type="project" value="UniProtKB"/>
</dbReference>
<dbReference type="CDD" id="cd03384">
    <property type="entry name" value="PAP2_wunen"/>
    <property type="match status" value="1"/>
</dbReference>
<dbReference type="FunFam" id="1.20.144.10:FF:000013">
    <property type="entry name" value="Phospholipid phosphatase 3"/>
    <property type="match status" value="1"/>
</dbReference>
<dbReference type="Gene3D" id="1.20.144.10">
    <property type="entry name" value="Phosphatidic acid phosphatase type 2/haloperoxidase"/>
    <property type="match status" value="1"/>
</dbReference>
<dbReference type="InterPro" id="IPR036938">
    <property type="entry name" value="P_Acid_Pase_2/haloperoxi_sf"/>
</dbReference>
<dbReference type="InterPro" id="IPR000326">
    <property type="entry name" value="P_Acid_Pase_2/haloperoxidase"/>
</dbReference>
<dbReference type="InterPro" id="IPR043216">
    <property type="entry name" value="PA_PP_rel"/>
</dbReference>
<dbReference type="PANTHER" id="PTHR10165">
    <property type="entry name" value="LIPID PHOSPHATE PHOSPHATASE"/>
    <property type="match status" value="1"/>
</dbReference>
<dbReference type="PANTHER" id="PTHR10165:SF79">
    <property type="entry name" value="PHOSPHOLIPID PHOSPHATASE 3"/>
    <property type="match status" value="1"/>
</dbReference>
<dbReference type="Pfam" id="PF01569">
    <property type="entry name" value="PAP2"/>
    <property type="match status" value="1"/>
</dbReference>
<dbReference type="SMART" id="SM00014">
    <property type="entry name" value="acidPPc"/>
    <property type="match status" value="1"/>
</dbReference>
<dbReference type="SUPFAM" id="SSF48317">
    <property type="entry name" value="Acid phosphatase/Vanadium-dependent haloperoxidase"/>
    <property type="match status" value="1"/>
</dbReference>
<accession>O14495</accession>
<accession>B2R651</accession>
<accession>D3DQ52</accession>
<accession>Q5U0F7</accession>
<accession>Q96GW0</accession>
<accession>Q99782</accession>